<dbReference type="EMBL" id="CR762202">
    <property type="protein sequence ID" value="CAJ82513.1"/>
    <property type="molecule type" value="mRNA"/>
</dbReference>
<dbReference type="EMBL" id="AAMC01118988">
    <property type="status" value="NOT_ANNOTATED_CDS"/>
    <property type="molecule type" value="Genomic_DNA"/>
</dbReference>
<dbReference type="EMBL" id="BC170704">
    <property type="protein sequence ID" value="AAI70704.1"/>
    <property type="status" value="ALT_INIT"/>
    <property type="molecule type" value="mRNA"/>
</dbReference>
<dbReference type="EMBL" id="BC170732">
    <property type="protein sequence ID" value="AAI70732.1"/>
    <property type="status" value="ALT_INIT"/>
    <property type="molecule type" value="mRNA"/>
</dbReference>
<dbReference type="RefSeq" id="NP_001016086.2">
    <property type="nucleotide sequence ID" value="NM_001016086.3"/>
</dbReference>
<dbReference type="SMR" id="Q28F29"/>
<dbReference type="FunCoup" id="Q28F29">
    <property type="interactions" value="2433"/>
</dbReference>
<dbReference type="STRING" id="8364.ENSXETP00000051956"/>
<dbReference type="PaxDb" id="8364-ENSXETP00000013410"/>
<dbReference type="GeneID" id="548840"/>
<dbReference type="KEGG" id="xtr:548840"/>
<dbReference type="AGR" id="Xenbase:XB-GENE-483978"/>
<dbReference type="CTD" id="284695"/>
<dbReference type="Xenbase" id="XB-GENE-483978">
    <property type="gene designation" value="znf326"/>
</dbReference>
<dbReference type="eggNOG" id="ENOG502QUAZ">
    <property type="taxonomic scope" value="Eukaryota"/>
</dbReference>
<dbReference type="InParanoid" id="Q28F29"/>
<dbReference type="OrthoDB" id="9904304at2759"/>
<dbReference type="TreeFam" id="TF105407"/>
<dbReference type="Proteomes" id="UP000008143">
    <property type="component" value="Chromosome 4"/>
</dbReference>
<dbReference type="GO" id="GO:0044609">
    <property type="term" value="C:DBIRD complex"/>
    <property type="evidence" value="ECO:0000250"/>
    <property type="project" value="UniProtKB"/>
</dbReference>
<dbReference type="GO" id="GO:0005634">
    <property type="term" value="C:nucleus"/>
    <property type="evidence" value="ECO:0007669"/>
    <property type="project" value="UniProtKB-SubCell"/>
</dbReference>
<dbReference type="GO" id="GO:0003677">
    <property type="term" value="F:DNA binding"/>
    <property type="evidence" value="ECO:0007669"/>
    <property type="project" value="UniProtKB-KW"/>
</dbReference>
<dbReference type="GO" id="GO:0000993">
    <property type="term" value="F:RNA polymerase II complex binding"/>
    <property type="evidence" value="ECO:0000250"/>
    <property type="project" value="UniProtKB"/>
</dbReference>
<dbReference type="GO" id="GO:0008270">
    <property type="term" value="F:zinc ion binding"/>
    <property type="evidence" value="ECO:0007669"/>
    <property type="project" value="UniProtKB-KW"/>
</dbReference>
<dbReference type="GO" id="GO:0010172">
    <property type="term" value="P:embryonic body morphogenesis"/>
    <property type="evidence" value="ECO:0000315"/>
    <property type="project" value="Xenbase"/>
</dbReference>
<dbReference type="GO" id="GO:0006397">
    <property type="term" value="P:mRNA processing"/>
    <property type="evidence" value="ECO:0007669"/>
    <property type="project" value="UniProtKB-KW"/>
</dbReference>
<dbReference type="GO" id="GO:0032784">
    <property type="term" value="P:regulation of DNA-templated transcription elongation"/>
    <property type="evidence" value="ECO:0000250"/>
    <property type="project" value="UniProtKB"/>
</dbReference>
<dbReference type="GO" id="GO:0043484">
    <property type="term" value="P:regulation of RNA splicing"/>
    <property type="evidence" value="ECO:0000250"/>
    <property type="project" value="UniProtKB"/>
</dbReference>
<dbReference type="GO" id="GO:0008380">
    <property type="term" value="P:RNA splicing"/>
    <property type="evidence" value="ECO:0007669"/>
    <property type="project" value="UniProtKB-KW"/>
</dbReference>
<dbReference type="InterPro" id="IPR007071">
    <property type="entry name" value="AKAP95"/>
</dbReference>
<dbReference type="InterPro" id="IPR034736">
    <property type="entry name" value="ZF_C2H2_AKAP95"/>
</dbReference>
<dbReference type="PANTHER" id="PTHR12190">
    <property type="entry name" value="A-KINASE ANCHOR PROTEIN AKAP 8"/>
    <property type="match status" value="1"/>
</dbReference>
<dbReference type="PANTHER" id="PTHR12190:SF1">
    <property type="entry name" value="DBIRD COMPLEX SUBUNIT ZNF326"/>
    <property type="match status" value="1"/>
</dbReference>
<dbReference type="Pfam" id="PF04988">
    <property type="entry name" value="AKAP95"/>
    <property type="match status" value="1"/>
</dbReference>
<dbReference type="PROSITE" id="PS51799">
    <property type="entry name" value="ZF_C2H2_AKAP95"/>
    <property type="match status" value="2"/>
</dbReference>
<gene>
    <name type="primary">znf326</name>
    <name type="synonym">zird</name>
    <name type="ORF">TGas098h07.1</name>
</gene>
<keyword id="KW-0238">DNA-binding</keyword>
<keyword id="KW-0479">Metal-binding</keyword>
<keyword id="KW-0507">mRNA processing</keyword>
<keyword id="KW-0508">mRNA splicing</keyword>
<keyword id="KW-0539">Nucleus</keyword>
<keyword id="KW-1185">Reference proteome</keyword>
<keyword id="KW-0677">Repeat</keyword>
<keyword id="KW-0862">Zinc</keyword>
<keyword id="KW-0863">Zinc-finger</keyword>
<reference key="1">
    <citation type="submission" date="2006-10" db="EMBL/GenBank/DDBJ databases">
        <authorList>
            <consortium name="Sanger Xenopus tropicalis EST/cDNA project"/>
        </authorList>
    </citation>
    <scope>NUCLEOTIDE SEQUENCE [LARGE SCALE MRNA]</scope>
    <source>
        <tissue>Gastrula</tissue>
    </source>
</reference>
<reference key="2">
    <citation type="journal article" date="2010" name="Science">
        <title>The genome of the Western clawed frog Xenopus tropicalis.</title>
        <authorList>
            <person name="Hellsten U."/>
            <person name="Harland R.M."/>
            <person name="Gilchrist M.J."/>
            <person name="Hendrix D."/>
            <person name="Jurka J."/>
            <person name="Kapitonov V."/>
            <person name="Ovcharenko I."/>
            <person name="Putnam N.H."/>
            <person name="Shu S."/>
            <person name="Taher L."/>
            <person name="Blitz I.L."/>
            <person name="Blumberg B."/>
            <person name="Dichmann D.S."/>
            <person name="Dubchak I."/>
            <person name="Amaya E."/>
            <person name="Detter J.C."/>
            <person name="Fletcher R."/>
            <person name="Gerhard D.S."/>
            <person name="Goodstein D."/>
            <person name="Graves T."/>
            <person name="Grigoriev I.V."/>
            <person name="Grimwood J."/>
            <person name="Kawashima T."/>
            <person name="Lindquist E."/>
            <person name="Lucas S.M."/>
            <person name="Mead P.E."/>
            <person name="Mitros T."/>
            <person name="Ogino H."/>
            <person name="Ohta Y."/>
            <person name="Poliakov A.V."/>
            <person name="Pollet N."/>
            <person name="Robert J."/>
            <person name="Salamov A."/>
            <person name="Sater A.K."/>
            <person name="Schmutz J."/>
            <person name="Terry A."/>
            <person name="Vize P.D."/>
            <person name="Warren W.C."/>
            <person name="Wells D."/>
            <person name="Wills A."/>
            <person name="Wilson R.K."/>
            <person name="Zimmerman L.B."/>
            <person name="Zorn A.M."/>
            <person name="Grainger R."/>
            <person name="Grammer T."/>
            <person name="Khokha M.K."/>
            <person name="Richardson P.M."/>
            <person name="Rokhsar D.S."/>
        </authorList>
    </citation>
    <scope>NUCLEOTIDE SEQUENCE [LARGE SCALE GENOMIC DNA]</scope>
</reference>
<reference key="3">
    <citation type="submission" date="2008-11" db="EMBL/GenBank/DDBJ databases">
        <authorList>
            <consortium name="NIH - Xenopus Gene Collection (XGC) project"/>
        </authorList>
    </citation>
    <scope>NUCLEOTIDE SEQUENCE [LARGE SCALE MRNA]</scope>
    <source>
        <tissue>Neurula</tissue>
    </source>
</reference>
<organism>
    <name type="scientific">Xenopus tropicalis</name>
    <name type="common">Western clawed frog</name>
    <name type="synonym">Silurana tropicalis</name>
    <dbReference type="NCBI Taxonomy" id="8364"/>
    <lineage>
        <taxon>Eukaryota</taxon>
        <taxon>Metazoa</taxon>
        <taxon>Chordata</taxon>
        <taxon>Craniata</taxon>
        <taxon>Vertebrata</taxon>
        <taxon>Euteleostomi</taxon>
        <taxon>Amphibia</taxon>
        <taxon>Batrachia</taxon>
        <taxon>Anura</taxon>
        <taxon>Pipoidea</taxon>
        <taxon>Pipidae</taxon>
        <taxon>Xenopodinae</taxon>
        <taxon>Xenopus</taxon>
        <taxon>Silurana</taxon>
    </lineage>
</organism>
<comment type="function">
    <text evidence="1">Core component of the DBIRD complex, a multiprotein complex that acts at the interface between core mRNP particles and RNA polymerase II (RNAPII) and integrates transcript elongation with the regulation of alternative splicing.</text>
</comment>
<comment type="subunit">
    <text evidence="1">Component of the DBIRD complex.</text>
</comment>
<comment type="subcellular location">
    <subcellularLocation>
        <location evidence="1">Nucleus</location>
    </subcellularLocation>
</comment>
<comment type="similarity">
    <text evidence="2">Belongs to the AKAP95 family.</text>
</comment>
<comment type="sequence caution" evidence="4">
    <conflict type="erroneous initiation">
        <sequence resource="EMBL-CDS" id="AAI70704"/>
    </conflict>
    <text>Truncated N-terminus.</text>
</comment>
<comment type="sequence caution" evidence="4">
    <conflict type="erroneous initiation">
        <sequence resource="EMBL-CDS" id="AAI70732"/>
    </conflict>
    <text>Truncated N-terminus.</text>
</comment>
<evidence type="ECO:0000250" key="1"/>
<evidence type="ECO:0000255" key="2">
    <source>
        <dbReference type="PROSITE-ProRule" id="PRU01140"/>
    </source>
</evidence>
<evidence type="ECO:0000256" key="3">
    <source>
        <dbReference type="SAM" id="MobiDB-lite"/>
    </source>
</evidence>
<evidence type="ECO:0000305" key="4"/>
<accession>Q28F29</accession>
<accession>B7ZT04</accession>
<accession>F6SBU2</accession>
<sequence>MDREYGSYNQRSMDSYGNQSYSVDEMGDSNFSRFGPYESYDSRSSVGGRDLYRSGYGYNDHEQGHFGDSYDGRYENPYRNSVDSFEGRSQGGSSWDPSFTRSKVRTGFMEDRGRDSYSSYGSFSSPYMKPATVGSRGRGMPAYPENAFGGRSNDAFGGPSKGRGRGRGQMPEYGGIRRPGLVGDYKQLGGAARGVARGVKRKMAPPFKPVGVFGKKQKLSKPGANQNKTVPPPAEKLSEEEEEKRRTEARREKQRRRREKNSEKYGDGMAFTCSFCKFRSFDEKGIEEHLSSTTHQEMLDHIQKQTKFDKPVMEFLHECIVNKFKKTAARRAQSLANEAAKALEKDVMEGVTPDDHMMKVETVHCSACSVYVPALHSSVQLHLKSADHSKSKLAYKEQIKRESILTATSILNNPLVKARYELYLKGENPFETQPEEQQQEQEEEEEEEEQQEQAAVPEQDLSEEQPAAIAAEPEGEDFTCDPLTTTDEV</sequence>
<name>ZN326_XENTR</name>
<feature type="chain" id="PRO_0000417537" description="DBIRD complex subunit ZNF326">
    <location>
        <begin position="1"/>
        <end position="489"/>
    </location>
</feature>
<feature type="zinc finger region" description="C2H2 AKAP95-type 1" evidence="2">
    <location>
        <begin position="273"/>
        <end position="295"/>
    </location>
</feature>
<feature type="zinc finger region" description="C2H2 AKAP95-type 2" evidence="2">
    <location>
        <begin position="365"/>
        <end position="388"/>
    </location>
</feature>
<feature type="region of interest" description="Disordered" evidence="3">
    <location>
        <begin position="1"/>
        <end position="28"/>
    </location>
</feature>
<feature type="region of interest" description="Disordered" evidence="3">
    <location>
        <begin position="62"/>
        <end position="100"/>
    </location>
</feature>
<feature type="region of interest" description="Disordered" evidence="3">
    <location>
        <begin position="133"/>
        <end position="181"/>
    </location>
</feature>
<feature type="region of interest" description="Disordered" evidence="3">
    <location>
        <begin position="205"/>
        <end position="263"/>
    </location>
</feature>
<feature type="region of interest" description="Disordered" evidence="3">
    <location>
        <begin position="431"/>
        <end position="489"/>
    </location>
</feature>
<feature type="short sequence motif" description="Bipartite nuclear localization signal" evidence="1">
    <location>
        <begin position="200"/>
        <end position="221"/>
    </location>
</feature>
<feature type="compositionally biased region" description="Polar residues" evidence="3">
    <location>
        <begin position="7"/>
        <end position="22"/>
    </location>
</feature>
<feature type="compositionally biased region" description="Basic and acidic residues" evidence="3">
    <location>
        <begin position="62"/>
        <end position="76"/>
    </location>
</feature>
<feature type="compositionally biased region" description="Polar residues" evidence="3">
    <location>
        <begin position="91"/>
        <end position="100"/>
    </location>
</feature>
<feature type="compositionally biased region" description="Acidic residues" evidence="3">
    <location>
        <begin position="433"/>
        <end position="451"/>
    </location>
</feature>
<protein>
    <recommendedName>
        <fullName>DBIRD complex subunit ZNF326</fullName>
    </recommendedName>
    <alternativeName>
        <fullName>Zinc finger protein 326</fullName>
    </alternativeName>
    <alternativeName>
        <fullName>Zinc finger protein interacting with mRNPs</fullName>
    </alternativeName>
</protein>
<proteinExistence type="evidence at transcript level"/>